<dbReference type="EMBL" id="CU928163">
    <property type="protein sequence ID" value="CAR13601.1"/>
    <property type="molecule type" value="Genomic_DNA"/>
</dbReference>
<dbReference type="RefSeq" id="WP_001197910.1">
    <property type="nucleotide sequence ID" value="NC_011751.1"/>
</dbReference>
<dbReference type="RefSeq" id="YP_002413129.1">
    <property type="nucleotide sequence ID" value="NC_011751.1"/>
</dbReference>
<dbReference type="SMR" id="B7NCB1"/>
<dbReference type="STRING" id="585056.ECUMN_2413"/>
<dbReference type="KEGG" id="eum:ECUMN_2413"/>
<dbReference type="PATRIC" id="fig|585056.7.peg.2594"/>
<dbReference type="HOGENOM" id="CLU_002755_1_2_6"/>
<dbReference type="Proteomes" id="UP000007097">
    <property type="component" value="Chromosome"/>
</dbReference>
<dbReference type="GO" id="GO:0005886">
    <property type="term" value="C:plasma membrane"/>
    <property type="evidence" value="ECO:0007669"/>
    <property type="project" value="UniProtKB-SubCell"/>
</dbReference>
<dbReference type="GO" id="GO:0042910">
    <property type="term" value="F:xenobiotic transmembrane transporter activity"/>
    <property type="evidence" value="ECO:0007669"/>
    <property type="project" value="TreeGrafter"/>
</dbReference>
<dbReference type="FunFam" id="1.20.1640.10:FF:000001">
    <property type="entry name" value="Efflux pump membrane transporter"/>
    <property type="match status" value="1"/>
</dbReference>
<dbReference type="FunFam" id="3.30.70.1430:FF:000001">
    <property type="entry name" value="Efflux pump membrane transporter"/>
    <property type="match status" value="1"/>
</dbReference>
<dbReference type="FunFam" id="3.30.2090.10:FF:000003">
    <property type="entry name" value="Multidrug resistance protein MdtB"/>
    <property type="match status" value="1"/>
</dbReference>
<dbReference type="FunFam" id="3.30.2090.10:FF:000006">
    <property type="entry name" value="Multidrug resistance protein MdtB"/>
    <property type="match status" value="1"/>
</dbReference>
<dbReference type="Gene3D" id="3.30.70.1430">
    <property type="entry name" value="Multidrug efflux transporter AcrB pore domain"/>
    <property type="match status" value="2"/>
</dbReference>
<dbReference type="Gene3D" id="3.30.70.1440">
    <property type="entry name" value="Multidrug efflux transporter AcrB pore domain"/>
    <property type="match status" value="1"/>
</dbReference>
<dbReference type="Gene3D" id="3.30.70.1320">
    <property type="entry name" value="Multidrug efflux transporter AcrB pore domain like"/>
    <property type="match status" value="1"/>
</dbReference>
<dbReference type="Gene3D" id="3.30.2090.10">
    <property type="entry name" value="Multidrug efflux transporter AcrB TolC docking domain, DN and DC subdomains"/>
    <property type="match status" value="2"/>
</dbReference>
<dbReference type="Gene3D" id="1.20.1640.10">
    <property type="entry name" value="Multidrug efflux transporter AcrB transmembrane domain"/>
    <property type="match status" value="2"/>
</dbReference>
<dbReference type="HAMAP" id="MF_01423">
    <property type="entry name" value="MdtB"/>
    <property type="match status" value="1"/>
</dbReference>
<dbReference type="InterPro" id="IPR027463">
    <property type="entry name" value="AcrB_DN_DC_subdom"/>
</dbReference>
<dbReference type="InterPro" id="IPR001036">
    <property type="entry name" value="Acrflvin-R"/>
</dbReference>
<dbReference type="InterPro" id="IPR022831">
    <property type="entry name" value="Multidrug-R_MdtB"/>
</dbReference>
<dbReference type="NCBIfam" id="NF007798">
    <property type="entry name" value="PRK10503.1"/>
    <property type="match status" value="1"/>
</dbReference>
<dbReference type="NCBIfam" id="NF033617">
    <property type="entry name" value="RND_permease_2"/>
    <property type="match status" value="1"/>
</dbReference>
<dbReference type="PANTHER" id="PTHR32063">
    <property type="match status" value="1"/>
</dbReference>
<dbReference type="PANTHER" id="PTHR32063:SF21">
    <property type="entry name" value="MULTIDRUG RESISTANCE PROTEIN MDTB"/>
    <property type="match status" value="1"/>
</dbReference>
<dbReference type="Pfam" id="PF00873">
    <property type="entry name" value="ACR_tran"/>
    <property type="match status" value="1"/>
</dbReference>
<dbReference type="PRINTS" id="PR00702">
    <property type="entry name" value="ACRIFLAVINRP"/>
</dbReference>
<dbReference type="SUPFAM" id="SSF82693">
    <property type="entry name" value="Multidrug efflux transporter AcrB pore domain, PN1, PN2, PC1 and PC2 subdomains"/>
    <property type="match status" value="3"/>
</dbReference>
<dbReference type="SUPFAM" id="SSF82714">
    <property type="entry name" value="Multidrug efflux transporter AcrB TolC docking domain, DN and DC subdomains"/>
    <property type="match status" value="2"/>
</dbReference>
<dbReference type="SUPFAM" id="SSF82866">
    <property type="entry name" value="Multidrug efflux transporter AcrB transmembrane domain"/>
    <property type="match status" value="2"/>
</dbReference>
<feature type="chain" id="PRO_1000145652" description="Multidrug resistance protein MdtB">
    <location>
        <begin position="1"/>
        <end position="1040"/>
    </location>
</feature>
<feature type="transmembrane region" description="Helical" evidence="1">
    <location>
        <begin position="16"/>
        <end position="36"/>
    </location>
</feature>
<feature type="transmembrane region" description="Helical" evidence="1">
    <location>
        <begin position="347"/>
        <end position="367"/>
    </location>
</feature>
<feature type="transmembrane region" description="Helical" evidence="1">
    <location>
        <begin position="369"/>
        <end position="389"/>
    </location>
</feature>
<feature type="transmembrane region" description="Helical" evidence="1">
    <location>
        <begin position="396"/>
        <end position="416"/>
    </location>
</feature>
<feature type="transmembrane region" description="Helical" evidence="1">
    <location>
        <begin position="440"/>
        <end position="460"/>
    </location>
</feature>
<feature type="transmembrane region" description="Helical" evidence="1">
    <location>
        <begin position="472"/>
        <end position="492"/>
    </location>
</feature>
<feature type="transmembrane region" description="Helical" evidence="1">
    <location>
        <begin position="537"/>
        <end position="557"/>
    </location>
</feature>
<feature type="transmembrane region" description="Helical" evidence="1">
    <location>
        <begin position="863"/>
        <end position="883"/>
    </location>
</feature>
<feature type="transmembrane region" description="Helical" evidence="1">
    <location>
        <begin position="888"/>
        <end position="908"/>
    </location>
</feature>
<feature type="transmembrane region" description="Helical" evidence="1">
    <location>
        <begin position="911"/>
        <end position="931"/>
    </location>
</feature>
<feature type="transmembrane region" description="Helical" evidence="1">
    <location>
        <begin position="968"/>
        <end position="988"/>
    </location>
</feature>
<feature type="transmembrane region" description="Helical" evidence="1">
    <location>
        <begin position="998"/>
        <end position="1018"/>
    </location>
</feature>
<name>MDTB_ECOLU</name>
<keyword id="KW-0997">Cell inner membrane</keyword>
<keyword id="KW-1003">Cell membrane</keyword>
<keyword id="KW-0472">Membrane</keyword>
<keyword id="KW-0812">Transmembrane</keyword>
<keyword id="KW-1133">Transmembrane helix</keyword>
<keyword id="KW-0813">Transport</keyword>
<protein>
    <recommendedName>
        <fullName evidence="1">Multidrug resistance protein MdtB</fullName>
    </recommendedName>
    <alternativeName>
        <fullName evidence="1">Multidrug transporter MdtB</fullName>
    </alternativeName>
</protein>
<comment type="function">
    <text evidence="1">The MdtABC tripartite complex confers resistance against novobiocin and deoxycholate.</text>
</comment>
<comment type="subunit">
    <text evidence="1">Part of a tripartite efflux system composed of MdtA, MdtB and MdtC. MdtB forms a heteromultimer with MdtC.</text>
</comment>
<comment type="subcellular location">
    <subcellularLocation>
        <location evidence="1">Cell inner membrane</location>
        <topology evidence="1">Multi-pass membrane protein</topology>
    </subcellularLocation>
</comment>
<comment type="induction">
    <text>The mdtABC operon is transcriptionally activated by BaeR.</text>
</comment>
<comment type="similarity">
    <text evidence="1">Belongs to the resistance-nodulation-cell division (RND) (TC 2.A.6) family. MdtB subfamily.</text>
</comment>
<proteinExistence type="evidence at transcript level"/>
<sequence length="1040" mass="112134">MQVLPPSSTGGPSRLFIMRPVATTLLMVAILLAGIIGYRALPVSALPEVDYPTIQVVTLYPGASPDVMTSAVTAPLERQFGQMSGLKQMSSQSSGGASVITLQFQLTLPLDVAEQEVQAAINAATNLLPSDLPNPPVYSKVNPADPPIMTLAVTSTAMPMTQVEDMVETRVAQKISQISGVGLVTLSGGQRPAVRVKLNAQAIAALGLTSETVRTAITGANVNSAKGSLDGPSRAVTLSANDQMQSAEEYRQLIIAYQNGAPIRLGDVATVEQGAENSWLGAWANKEQAIVMNVQRQPGANIISTADSIRQMLPQLTESLPKSVKVTVLSDRTTNIRASVNDTQFELMMAIALVVMIIYLFLRNIPATIIPGVAVPLSLIGTFAVMVFLDFSINNLTLMALTIATGFVVDDAIVVIENISRYIEKGEKPLAAALKGAGEIGFTIISLTFSLIAVLIPLLFMGDIVGRLFREFAITLAVAILISAVVSLTLTPMMCARMLSQESLRKQNRFSRASEKMFERIIAAYGRGLAKVLNHPWLTLSVALSTLLLSVLLWVFIPKGFFPVQDNGIIQGTLQAPQSSSFTNMAQRQRQVADVILQDPAVQSLTSFVGVDGTNPSLNSARLQINLKPLDERDDRVQKVIARLQTAVDKVPGVDLFLQPTQDLTIDTQVSRTQYQFTLQATSLDALSTWVPQLMEKLQQLPQLSDVSSDWQDKGLVAYVNVDRDSASRLGINMADVDNALYNAFGQRLISTIYTQANQYRVVLEHNTENTPGLAALDTIRLTSSDGGVVPLSSIAKIEQRFAPLSINHLDQFPVTTISFNVPDNYSLGDAVQAIMDTEKTLNLPVDITTQFQGSTLAFQSALGSTVWLIVAAVVAMYIVLGILYESFIHPITILSTLPTAGVGALLALLIAGSELDVIAIIGIILLIGIVKKNAIMMIDFALAAEREQGMSPRDAIYQACLLRFRPILMTTLAALLGALPLMLSTGVGAELRRPLGIGMVGGLIVSQVLTLFTTPVIYLLFDRLALWTKSRFARHEEEA</sequence>
<accession>B7NCB1</accession>
<organism>
    <name type="scientific">Escherichia coli O17:K52:H18 (strain UMN026 / ExPEC)</name>
    <dbReference type="NCBI Taxonomy" id="585056"/>
    <lineage>
        <taxon>Bacteria</taxon>
        <taxon>Pseudomonadati</taxon>
        <taxon>Pseudomonadota</taxon>
        <taxon>Gammaproteobacteria</taxon>
        <taxon>Enterobacterales</taxon>
        <taxon>Enterobacteriaceae</taxon>
        <taxon>Escherichia</taxon>
    </lineage>
</organism>
<evidence type="ECO:0000255" key="1">
    <source>
        <dbReference type="HAMAP-Rule" id="MF_01423"/>
    </source>
</evidence>
<reference key="1">
    <citation type="journal article" date="2009" name="PLoS Genet.">
        <title>Organised genome dynamics in the Escherichia coli species results in highly diverse adaptive paths.</title>
        <authorList>
            <person name="Touchon M."/>
            <person name="Hoede C."/>
            <person name="Tenaillon O."/>
            <person name="Barbe V."/>
            <person name="Baeriswyl S."/>
            <person name="Bidet P."/>
            <person name="Bingen E."/>
            <person name="Bonacorsi S."/>
            <person name="Bouchier C."/>
            <person name="Bouvet O."/>
            <person name="Calteau A."/>
            <person name="Chiapello H."/>
            <person name="Clermont O."/>
            <person name="Cruveiller S."/>
            <person name="Danchin A."/>
            <person name="Diard M."/>
            <person name="Dossat C."/>
            <person name="Karoui M.E."/>
            <person name="Frapy E."/>
            <person name="Garry L."/>
            <person name="Ghigo J.M."/>
            <person name="Gilles A.M."/>
            <person name="Johnson J."/>
            <person name="Le Bouguenec C."/>
            <person name="Lescat M."/>
            <person name="Mangenot S."/>
            <person name="Martinez-Jehanne V."/>
            <person name="Matic I."/>
            <person name="Nassif X."/>
            <person name="Oztas S."/>
            <person name="Petit M.A."/>
            <person name="Pichon C."/>
            <person name="Rouy Z."/>
            <person name="Ruf C.S."/>
            <person name="Schneider D."/>
            <person name="Tourret J."/>
            <person name="Vacherie B."/>
            <person name="Vallenet D."/>
            <person name="Medigue C."/>
            <person name="Rocha E.P.C."/>
            <person name="Denamur E."/>
        </authorList>
    </citation>
    <scope>NUCLEOTIDE SEQUENCE [LARGE SCALE GENOMIC DNA]</scope>
    <source>
        <strain>UMN026 / ExPEC</strain>
    </source>
</reference>
<gene>
    <name evidence="1" type="primary">mdtB</name>
    <name type="ordered locus">ECUMN_2413</name>
</gene>